<comment type="developmental stage">
    <text>Heat shock cognate proteins are expressed constitutively during normal development.</text>
</comment>
<comment type="similarity">
    <text evidence="3">Belongs to the heat shock protein 70 family.</text>
</comment>
<reference key="1">
    <citation type="journal article" date="1993" name="Gene">
        <title>Genomic structure and sequence analysis of Drosophila melanogaster HSC70 genes.</title>
        <authorList>
            <person name="Rubin D.M."/>
            <person name="Mehta A."/>
            <person name="Zhu J."/>
            <person name="Shoham S."/>
            <person name="Chen X.J."/>
            <person name="Wells Q."/>
            <person name="Palter K.B."/>
        </authorList>
    </citation>
    <scope>NUCLEOTIDE SEQUENCE [MRNA]</scope>
</reference>
<reference key="2">
    <citation type="journal article" date="2000" name="Science">
        <title>The genome sequence of Drosophila melanogaster.</title>
        <authorList>
            <person name="Adams M.D."/>
            <person name="Celniker S.E."/>
            <person name="Holt R.A."/>
            <person name="Evans C.A."/>
            <person name="Gocayne J.D."/>
            <person name="Amanatides P.G."/>
            <person name="Scherer S.E."/>
            <person name="Li P.W."/>
            <person name="Hoskins R.A."/>
            <person name="Galle R.F."/>
            <person name="George R.A."/>
            <person name="Lewis S.E."/>
            <person name="Richards S."/>
            <person name="Ashburner M."/>
            <person name="Henderson S.N."/>
            <person name="Sutton G.G."/>
            <person name="Wortman J.R."/>
            <person name="Yandell M.D."/>
            <person name="Zhang Q."/>
            <person name="Chen L.X."/>
            <person name="Brandon R.C."/>
            <person name="Rogers Y.-H.C."/>
            <person name="Blazej R.G."/>
            <person name="Champe M."/>
            <person name="Pfeiffer B.D."/>
            <person name="Wan K.H."/>
            <person name="Doyle C."/>
            <person name="Baxter E.G."/>
            <person name="Helt G."/>
            <person name="Nelson C.R."/>
            <person name="Miklos G.L.G."/>
            <person name="Abril J.F."/>
            <person name="Agbayani A."/>
            <person name="An H.-J."/>
            <person name="Andrews-Pfannkoch C."/>
            <person name="Baldwin D."/>
            <person name="Ballew R.M."/>
            <person name="Basu A."/>
            <person name="Baxendale J."/>
            <person name="Bayraktaroglu L."/>
            <person name="Beasley E.M."/>
            <person name="Beeson K.Y."/>
            <person name="Benos P.V."/>
            <person name="Berman B.P."/>
            <person name="Bhandari D."/>
            <person name="Bolshakov S."/>
            <person name="Borkova D."/>
            <person name="Botchan M.R."/>
            <person name="Bouck J."/>
            <person name="Brokstein P."/>
            <person name="Brottier P."/>
            <person name="Burtis K.C."/>
            <person name="Busam D.A."/>
            <person name="Butler H."/>
            <person name="Cadieu E."/>
            <person name="Center A."/>
            <person name="Chandra I."/>
            <person name="Cherry J.M."/>
            <person name="Cawley S."/>
            <person name="Dahlke C."/>
            <person name="Davenport L.B."/>
            <person name="Davies P."/>
            <person name="de Pablos B."/>
            <person name="Delcher A."/>
            <person name="Deng Z."/>
            <person name="Mays A.D."/>
            <person name="Dew I."/>
            <person name="Dietz S.M."/>
            <person name="Dodson K."/>
            <person name="Doup L.E."/>
            <person name="Downes M."/>
            <person name="Dugan-Rocha S."/>
            <person name="Dunkov B.C."/>
            <person name="Dunn P."/>
            <person name="Durbin K.J."/>
            <person name="Evangelista C.C."/>
            <person name="Ferraz C."/>
            <person name="Ferriera S."/>
            <person name="Fleischmann W."/>
            <person name="Fosler C."/>
            <person name="Gabrielian A.E."/>
            <person name="Garg N.S."/>
            <person name="Gelbart W.M."/>
            <person name="Glasser K."/>
            <person name="Glodek A."/>
            <person name="Gong F."/>
            <person name="Gorrell J.H."/>
            <person name="Gu Z."/>
            <person name="Guan P."/>
            <person name="Harris M."/>
            <person name="Harris N.L."/>
            <person name="Harvey D.A."/>
            <person name="Heiman T.J."/>
            <person name="Hernandez J.R."/>
            <person name="Houck J."/>
            <person name="Hostin D."/>
            <person name="Houston K.A."/>
            <person name="Howland T.J."/>
            <person name="Wei M.-H."/>
            <person name="Ibegwam C."/>
            <person name="Jalali M."/>
            <person name="Kalush F."/>
            <person name="Karpen G.H."/>
            <person name="Ke Z."/>
            <person name="Kennison J.A."/>
            <person name="Ketchum K.A."/>
            <person name="Kimmel B.E."/>
            <person name="Kodira C.D."/>
            <person name="Kraft C.L."/>
            <person name="Kravitz S."/>
            <person name="Kulp D."/>
            <person name="Lai Z."/>
            <person name="Lasko P."/>
            <person name="Lei Y."/>
            <person name="Levitsky A.A."/>
            <person name="Li J.H."/>
            <person name="Li Z."/>
            <person name="Liang Y."/>
            <person name="Lin X."/>
            <person name="Liu X."/>
            <person name="Mattei B."/>
            <person name="McIntosh T.C."/>
            <person name="McLeod M.P."/>
            <person name="McPherson D."/>
            <person name="Merkulov G."/>
            <person name="Milshina N.V."/>
            <person name="Mobarry C."/>
            <person name="Morris J."/>
            <person name="Moshrefi A."/>
            <person name="Mount S.M."/>
            <person name="Moy M."/>
            <person name="Murphy B."/>
            <person name="Murphy L."/>
            <person name="Muzny D.M."/>
            <person name="Nelson D.L."/>
            <person name="Nelson D.R."/>
            <person name="Nelson K.A."/>
            <person name="Nixon K."/>
            <person name="Nusskern D.R."/>
            <person name="Pacleb J.M."/>
            <person name="Palazzolo M."/>
            <person name="Pittman G.S."/>
            <person name="Pan S."/>
            <person name="Pollard J."/>
            <person name="Puri V."/>
            <person name="Reese M.G."/>
            <person name="Reinert K."/>
            <person name="Remington K."/>
            <person name="Saunders R.D.C."/>
            <person name="Scheeler F."/>
            <person name="Shen H."/>
            <person name="Shue B.C."/>
            <person name="Siden-Kiamos I."/>
            <person name="Simpson M."/>
            <person name="Skupski M.P."/>
            <person name="Smith T.J."/>
            <person name="Spier E."/>
            <person name="Spradling A.C."/>
            <person name="Stapleton M."/>
            <person name="Strong R."/>
            <person name="Sun E."/>
            <person name="Svirskas R."/>
            <person name="Tector C."/>
            <person name="Turner R."/>
            <person name="Venter E."/>
            <person name="Wang A.H."/>
            <person name="Wang X."/>
            <person name="Wang Z.-Y."/>
            <person name="Wassarman D.A."/>
            <person name="Weinstock G.M."/>
            <person name="Weissenbach J."/>
            <person name="Williams S.M."/>
            <person name="Woodage T."/>
            <person name="Worley K.C."/>
            <person name="Wu D."/>
            <person name="Yang S."/>
            <person name="Yao Q.A."/>
            <person name="Ye J."/>
            <person name="Yeh R.-F."/>
            <person name="Zaveri J.S."/>
            <person name="Zhan M."/>
            <person name="Zhang G."/>
            <person name="Zhao Q."/>
            <person name="Zheng L."/>
            <person name="Zheng X.H."/>
            <person name="Zhong F.N."/>
            <person name="Zhong W."/>
            <person name="Zhou X."/>
            <person name="Zhu S.C."/>
            <person name="Zhu X."/>
            <person name="Smith H.O."/>
            <person name="Gibbs R.A."/>
            <person name="Myers E.W."/>
            <person name="Rubin G.M."/>
            <person name="Venter J.C."/>
        </authorList>
    </citation>
    <scope>NUCLEOTIDE SEQUENCE [LARGE SCALE GENOMIC DNA]</scope>
    <source>
        <strain>Berkeley</strain>
    </source>
</reference>
<reference key="3">
    <citation type="journal article" date="2002" name="Genome Biol.">
        <title>Annotation of the Drosophila melanogaster euchromatic genome: a systematic review.</title>
        <authorList>
            <person name="Misra S."/>
            <person name="Crosby M.A."/>
            <person name="Mungall C.J."/>
            <person name="Matthews B.B."/>
            <person name="Campbell K.S."/>
            <person name="Hradecky P."/>
            <person name="Huang Y."/>
            <person name="Kaminker J.S."/>
            <person name="Millburn G.H."/>
            <person name="Prochnik S.E."/>
            <person name="Smith C.D."/>
            <person name="Tupy J.L."/>
            <person name="Whitfield E.J."/>
            <person name="Bayraktaroglu L."/>
            <person name="Berman B.P."/>
            <person name="Bettencourt B.R."/>
            <person name="Celniker S.E."/>
            <person name="de Grey A.D.N.J."/>
            <person name="Drysdale R.A."/>
            <person name="Harris N.L."/>
            <person name="Richter J."/>
            <person name="Russo S."/>
            <person name="Schroeder A.J."/>
            <person name="Shu S.Q."/>
            <person name="Stapleton M."/>
            <person name="Yamada C."/>
            <person name="Ashburner M."/>
            <person name="Gelbart W.M."/>
            <person name="Rubin G.M."/>
            <person name="Lewis S.E."/>
        </authorList>
    </citation>
    <scope>GENOME REANNOTATION</scope>
    <source>
        <strain>Berkeley</strain>
    </source>
</reference>
<reference key="4">
    <citation type="journal article" date="1982" name="Proc. Natl. Acad. Sci. U.S.A.">
        <title>Drosophila gene related to the major heat shock-induced gene is transcribed at normal temperatures and not induced by heat shock.</title>
        <authorList>
            <person name="Ingolia T.D."/>
            <person name="Craig E.A."/>
        </authorList>
    </citation>
    <scope>NUCLEOTIDE SEQUENCE [GENOMIC DNA] OF 1-68</scope>
</reference>
<reference key="5">
    <citation type="journal article" date="2008" name="J. Proteome Res.">
        <title>Phosphoproteome analysis of Drosophila melanogaster embryos.</title>
        <authorList>
            <person name="Zhai B."/>
            <person name="Villen J."/>
            <person name="Beausoleil S.A."/>
            <person name="Mintseris J."/>
            <person name="Gygi S.P."/>
        </authorList>
    </citation>
    <scope>PHOSPHORYLATION [LARGE SCALE ANALYSIS] AT SER-362</scope>
    <scope>IDENTIFICATION BY MASS SPECTROMETRY</scope>
    <source>
        <tissue>Embryo</tissue>
    </source>
</reference>
<protein>
    <recommendedName>
        <fullName>Heat shock 70 kDa protein cognate 1</fullName>
    </recommendedName>
    <alternativeName>
        <fullName>Heat shock 70 kDa protein 70C</fullName>
    </alternativeName>
</protein>
<keyword id="KW-0067">ATP-binding</keyword>
<keyword id="KW-0547">Nucleotide-binding</keyword>
<keyword id="KW-0597">Phosphoprotein</keyword>
<keyword id="KW-1185">Reference proteome</keyword>
<keyword id="KW-0346">Stress response</keyword>
<sequence length="641" mass="70686">MPKLPAVGIDLGTTYSCVGVFQHGKVEIIANDQGNRTTPSYVAFTESERLIGDAAKNQVAMNPNNTIFDAKRLIGRRFDDATVQSDMKHWPFEVFAENGKPRIRVEYKGERKSFYPEEVSSMVLTKMRETAEAYLGGTVTDAVVTVPAYFNDSQRQATKDAGAIAGLNVLRIINEPTAAAIAYGLDKQGTSERNVLIFDLGGGTFDVSVLTIEDGIFEVKATAGDTHLGGEDFDNRLVNHFVQEFQRKHKKDLGQNKRALRRLRTACERAKRTLSSSTQASIEIDSLFEGVDFYTSVTRARFEELNGDLFRGTMEPVAKALRDAKMDKGQIHDIVLVGGSTRIPKVQRLLQDFFNGKELNKSINPDEAVAYGAAVQAAILHGDKSEAVQDLLLLDVTPLSLGIETAGGVMTTLIKRNTTIPTKQTQIFTTYADNQPGVLIQVFEGERAMTRDNNSLGKFELSAIPPAPRGVPQVEVTFDIDANGILNVTALEKSTGKENRITITNDKGRLSKEDIERMVNDAEAYRQADEQQRDRINAKNQLESYCFQLRSTLDDEHLSSRFSPADRETIQQRSSETIAWLDANQLAERQEFEHKQQELERICSPIITRLYQGAGMAPPPTAGGSNPGATGGSGPTIEEVD</sequence>
<accession>P29843</accession>
<accession>Q9VUA7</accession>
<name>HSP7A_DROME</name>
<feature type="chain" id="PRO_0000078337" description="Heat shock 70 kDa protein cognate 1">
    <location>
        <begin position="1"/>
        <end position="641"/>
    </location>
</feature>
<feature type="region of interest" description="Disordered" evidence="1">
    <location>
        <begin position="612"/>
        <end position="641"/>
    </location>
</feature>
<feature type="compositionally biased region" description="Gly residues" evidence="1">
    <location>
        <begin position="625"/>
        <end position="634"/>
    </location>
</feature>
<feature type="modified residue" description="Phosphoserine" evidence="2">
    <location>
        <position position="362"/>
    </location>
</feature>
<gene>
    <name type="primary">Hsc70-1</name>
    <name type="synonym">Hsc1</name>
    <name type="ORF">CG8937</name>
</gene>
<organism>
    <name type="scientific">Drosophila melanogaster</name>
    <name type="common">Fruit fly</name>
    <dbReference type="NCBI Taxonomy" id="7227"/>
    <lineage>
        <taxon>Eukaryota</taxon>
        <taxon>Metazoa</taxon>
        <taxon>Ecdysozoa</taxon>
        <taxon>Arthropoda</taxon>
        <taxon>Hexapoda</taxon>
        <taxon>Insecta</taxon>
        <taxon>Pterygota</taxon>
        <taxon>Neoptera</taxon>
        <taxon>Endopterygota</taxon>
        <taxon>Diptera</taxon>
        <taxon>Brachycera</taxon>
        <taxon>Muscomorpha</taxon>
        <taxon>Ephydroidea</taxon>
        <taxon>Drosophilidae</taxon>
        <taxon>Drosophila</taxon>
        <taxon>Sophophora</taxon>
    </lineage>
</organism>
<dbReference type="EMBL" id="L01501">
    <property type="protein sequence ID" value="AAA28625.1"/>
    <property type="molecule type" value="mRNA"/>
</dbReference>
<dbReference type="EMBL" id="AE014296">
    <property type="protein sequence ID" value="AAF49782.1"/>
    <property type="molecule type" value="Genomic_DNA"/>
</dbReference>
<dbReference type="EMBL" id="J01085">
    <property type="protein sequence ID" value="AAA28629.1"/>
    <property type="molecule type" value="Genomic_DNA"/>
</dbReference>
<dbReference type="PIR" id="B03309">
    <property type="entry name" value="B03309"/>
</dbReference>
<dbReference type="PIR" id="JN0668">
    <property type="entry name" value="JN0668"/>
</dbReference>
<dbReference type="RefSeq" id="NP_524063.1">
    <property type="nucleotide sequence ID" value="NM_079339.3"/>
</dbReference>
<dbReference type="SMR" id="P29843"/>
<dbReference type="BioGRID" id="64882">
    <property type="interactions" value="15"/>
</dbReference>
<dbReference type="FunCoup" id="P29843">
    <property type="interactions" value="428"/>
</dbReference>
<dbReference type="IntAct" id="P29843">
    <property type="interactions" value="6"/>
</dbReference>
<dbReference type="MINT" id="P29843"/>
<dbReference type="STRING" id="7227.FBpp0075504"/>
<dbReference type="GlyGen" id="P29843">
    <property type="glycosylation" value="2 sites"/>
</dbReference>
<dbReference type="iPTMnet" id="P29843"/>
<dbReference type="PaxDb" id="7227-FBpp0075504"/>
<dbReference type="DNASU" id="39542"/>
<dbReference type="EnsemblMetazoa" id="FBtr0075762">
    <property type="protein sequence ID" value="FBpp0075504"/>
    <property type="gene ID" value="FBgn0001216"/>
</dbReference>
<dbReference type="GeneID" id="39542"/>
<dbReference type="KEGG" id="dme:Dmel_CG8937"/>
<dbReference type="AGR" id="FB:FBgn0001216"/>
<dbReference type="CTD" id="39542"/>
<dbReference type="FlyBase" id="FBgn0001216">
    <property type="gene designation" value="Hsc70-1"/>
</dbReference>
<dbReference type="VEuPathDB" id="VectorBase:FBgn0001216"/>
<dbReference type="eggNOG" id="KOG0101">
    <property type="taxonomic scope" value="Eukaryota"/>
</dbReference>
<dbReference type="HOGENOM" id="CLU_005965_3_0_1"/>
<dbReference type="InParanoid" id="P29843"/>
<dbReference type="OMA" id="CNPIMTR"/>
<dbReference type="OrthoDB" id="2401965at2759"/>
<dbReference type="PhylomeDB" id="P29843"/>
<dbReference type="Reactome" id="R-DME-3371497">
    <property type="pathway name" value="HSP90 chaperone cycle for steroid hormone receptors (SHR) in the presence of ligand"/>
</dbReference>
<dbReference type="SignaLink" id="P29843"/>
<dbReference type="BioGRID-ORCS" id="39542">
    <property type="hits" value="0 hits in 3 CRISPR screens"/>
</dbReference>
<dbReference type="GenomeRNAi" id="39542"/>
<dbReference type="PRO" id="PR:P29843"/>
<dbReference type="Proteomes" id="UP000000803">
    <property type="component" value="Chromosome 3L"/>
</dbReference>
<dbReference type="Bgee" id="FBgn0001216">
    <property type="expression patterns" value="Expressed in muscle cell in insect leg and 45 other cell types or tissues"/>
</dbReference>
<dbReference type="ExpressionAtlas" id="P29843">
    <property type="expression patterns" value="baseline and differential"/>
</dbReference>
<dbReference type="GO" id="GO:0005737">
    <property type="term" value="C:cytoplasm"/>
    <property type="evidence" value="ECO:0000250"/>
    <property type="project" value="FlyBase"/>
</dbReference>
<dbReference type="GO" id="GO:0005829">
    <property type="term" value="C:cytosol"/>
    <property type="evidence" value="ECO:0000318"/>
    <property type="project" value="GO_Central"/>
</dbReference>
<dbReference type="GO" id="GO:0005634">
    <property type="term" value="C:nucleus"/>
    <property type="evidence" value="ECO:0000250"/>
    <property type="project" value="FlyBase"/>
</dbReference>
<dbReference type="GO" id="GO:0005886">
    <property type="term" value="C:plasma membrane"/>
    <property type="evidence" value="ECO:0000318"/>
    <property type="project" value="GO_Central"/>
</dbReference>
<dbReference type="GO" id="GO:0005524">
    <property type="term" value="F:ATP binding"/>
    <property type="evidence" value="ECO:0007669"/>
    <property type="project" value="UniProtKB-KW"/>
</dbReference>
<dbReference type="GO" id="GO:0016887">
    <property type="term" value="F:ATP hydrolysis activity"/>
    <property type="evidence" value="ECO:0000250"/>
    <property type="project" value="FlyBase"/>
</dbReference>
<dbReference type="GO" id="GO:0140662">
    <property type="term" value="F:ATP-dependent protein folding chaperone"/>
    <property type="evidence" value="ECO:0007669"/>
    <property type="project" value="InterPro"/>
</dbReference>
<dbReference type="GO" id="GO:0031072">
    <property type="term" value="F:heat shock protein binding"/>
    <property type="evidence" value="ECO:0000318"/>
    <property type="project" value="GO_Central"/>
</dbReference>
<dbReference type="GO" id="GO:0044183">
    <property type="term" value="F:protein folding chaperone"/>
    <property type="evidence" value="ECO:0000318"/>
    <property type="project" value="GO_Central"/>
</dbReference>
<dbReference type="GO" id="GO:0051085">
    <property type="term" value="P:chaperone cofactor-dependent protein refolding"/>
    <property type="evidence" value="ECO:0000318"/>
    <property type="project" value="GO_Central"/>
</dbReference>
<dbReference type="GO" id="GO:0006457">
    <property type="term" value="P:protein folding"/>
    <property type="evidence" value="ECO:0000250"/>
    <property type="project" value="FlyBase"/>
</dbReference>
<dbReference type="GO" id="GO:0042026">
    <property type="term" value="P:protein refolding"/>
    <property type="evidence" value="ECO:0000318"/>
    <property type="project" value="GO_Central"/>
</dbReference>
<dbReference type="CDD" id="cd10233">
    <property type="entry name" value="ASKHA_NBD_HSP70_HSPA1"/>
    <property type="match status" value="1"/>
</dbReference>
<dbReference type="FunFam" id="2.60.34.10:FF:000002">
    <property type="entry name" value="Heat shock 70 kDa"/>
    <property type="match status" value="1"/>
</dbReference>
<dbReference type="FunFam" id="3.30.420.40:FF:000172">
    <property type="entry name" value="Heat shock 70 kDa protein"/>
    <property type="match status" value="1"/>
</dbReference>
<dbReference type="FunFam" id="3.30.30.30:FF:000001">
    <property type="entry name" value="heat shock 70 kDa protein-like"/>
    <property type="match status" value="1"/>
</dbReference>
<dbReference type="FunFam" id="3.30.420.40:FF:000135">
    <property type="entry name" value="Heat shock cognate 71 kDa protein"/>
    <property type="match status" value="1"/>
</dbReference>
<dbReference type="FunFam" id="3.90.640.10:FF:000134">
    <property type="entry name" value="Heat shock cognate 71 kDa protein"/>
    <property type="match status" value="1"/>
</dbReference>
<dbReference type="FunFam" id="1.20.1270.10:FF:000022">
    <property type="entry name" value="Heat shock protein 70"/>
    <property type="match status" value="1"/>
</dbReference>
<dbReference type="FunFam" id="3.30.420.40:FF:000026">
    <property type="entry name" value="Heat shock protein 70"/>
    <property type="match status" value="1"/>
</dbReference>
<dbReference type="Gene3D" id="1.20.1270.10">
    <property type="match status" value="1"/>
</dbReference>
<dbReference type="Gene3D" id="3.30.30.30">
    <property type="match status" value="1"/>
</dbReference>
<dbReference type="Gene3D" id="3.30.420.40">
    <property type="match status" value="2"/>
</dbReference>
<dbReference type="Gene3D" id="3.90.640.10">
    <property type="entry name" value="Actin, Chain A, domain 4"/>
    <property type="match status" value="1"/>
</dbReference>
<dbReference type="Gene3D" id="2.60.34.10">
    <property type="entry name" value="Substrate Binding Domain Of DNAk, Chain A, domain 1"/>
    <property type="match status" value="1"/>
</dbReference>
<dbReference type="InterPro" id="IPR043129">
    <property type="entry name" value="ATPase_NBD"/>
</dbReference>
<dbReference type="InterPro" id="IPR018181">
    <property type="entry name" value="Heat_shock_70_CS"/>
</dbReference>
<dbReference type="InterPro" id="IPR029048">
    <property type="entry name" value="HSP70_C_sf"/>
</dbReference>
<dbReference type="InterPro" id="IPR029047">
    <property type="entry name" value="HSP70_peptide-bd_sf"/>
</dbReference>
<dbReference type="InterPro" id="IPR013126">
    <property type="entry name" value="Hsp_70_fam"/>
</dbReference>
<dbReference type="NCBIfam" id="NF001413">
    <property type="entry name" value="PRK00290.1"/>
    <property type="match status" value="1"/>
</dbReference>
<dbReference type="PANTHER" id="PTHR19375">
    <property type="entry name" value="HEAT SHOCK PROTEIN 70KDA"/>
    <property type="match status" value="1"/>
</dbReference>
<dbReference type="Pfam" id="PF00012">
    <property type="entry name" value="HSP70"/>
    <property type="match status" value="1"/>
</dbReference>
<dbReference type="PRINTS" id="PR00301">
    <property type="entry name" value="HEATSHOCK70"/>
</dbReference>
<dbReference type="SUPFAM" id="SSF53067">
    <property type="entry name" value="Actin-like ATPase domain"/>
    <property type="match status" value="2"/>
</dbReference>
<dbReference type="SUPFAM" id="SSF100934">
    <property type="entry name" value="Heat shock protein 70kD (HSP70), C-terminal subdomain"/>
    <property type="match status" value="1"/>
</dbReference>
<dbReference type="SUPFAM" id="SSF100920">
    <property type="entry name" value="Heat shock protein 70kD (HSP70), peptide-binding domain"/>
    <property type="match status" value="1"/>
</dbReference>
<dbReference type="PROSITE" id="PS00297">
    <property type="entry name" value="HSP70_1"/>
    <property type="match status" value="1"/>
</dbReference>
<dbReference type="PROSITE" id="PS00329">
    <property type="entry name" value="HSP70_2"/>
    <property type="match status" value="1"/>
</dbReference>
<dbReference type="PROSITE" id="PS01036">
    <property type="entry name" value="HSP70_3"/>
    <property type="match status" value="1"/>
</dbReference>
<proteinExistence type="evidence at protein level"/>
<evidence type="ECO:0000256" key="1">
    <source>
        <dbReference type="SAM" id="MobiDB-lite"/>
    </source>
</evidence>
<evidence type="ECO:0000269" key="2">
    <source>
    </source>
</evidence>
<evidence type="ECO:0000305" key="3"/>